<dbReference type="EMBL" id="M62426">
    <property type="protein sequence ID" value="AAA26402.1"/>
    <property type="molecule type" value="Genomic_DNA"/>
</dbReference>
<dbReference type="EMBL" id="M62846">
    <property type="protein sequence ID" value="AAA98154.1"/>
    <property type="molecule type" value="Genomic_DNA"/>
</dbReference>
<dbReference type="RefSeq" id="WP_011205832.1">
    <property type="nucleotide sequence ID" value="NZ_VMTS01000048.1"/>
</dbReference>
<dbReference type="SMR" id="Q52328"/>
<dbReference type="GO" id="GO:0046690">
    <property type="term" value="P:response to tellurium ion"/>
    <property type="evidence" value="ECO:0007669"/>
    <property type="project" value="UniProtKB-KW"/>
</dbReference>
<dbReference type="InterPro" id="IPR008863">
    <property type="entry name" value="Toxic_anion-R_TelA"/>
</dbReference>
<dbReference type="PANTHER" id="PTHR38432">
    <property type="entry name" value="TELA-LIKE PROTEIN SAOUHSC_01408"/>
    <property type="match status" value="1"/>
</dbReference>
<dbReference type="PANTHER" id="PTHR38432:SF1">
    <property type="entry name" value="TELA-LIKE PROTEIN SAOUHSC_01408"/>
    <property type="match status" value="1"/>
</dbReference>
<dbReference type="Pfam" id="PF05816">
    <property type="entry name" value="TelA"/>
    <property type="match status" value="1"/>
</dbReference>
<dbReference type="PIRSF" id="PIRSF026508">
    <property type="entry name" value="TelA"/>
    <property type="match status" value="1"/>
</dbReference>
<keyword id="KW-0614">Plasmid</keyword>
<keyword id="KW-0778">Tellurium resistance</keyword>
<comment type="function">
    <text>Belongs to the kla operon, which is associated with cryptic tellurite resistance, and IncW plasmid fertility inhibition.</text>
</comment>
<comment type="similarity">
    <text evidence="1">Belongs to the TelA family.</text>
</comment>
<name>KLAB_ECOLX</name>
<protein>
    <recommendedName>
        <fullName>Protein KlaB</fullName>
    </recommendedName>
    <alternativeName>
        <fullName>Protein TelA</fullName>
    </alternativeName>
</protein>
<organism>
    <name type="scientific">Escherichia coli</name>
    <dbReference type="NCBI Taxonomy" id="562"/>
    <lineage>
        <taxon>Bacteria</taxon>
        <taxon>Pseudomonadati</taxon>
        <taxon>Pseudomonadota</taxon>
        <taxon>Gammaproteobacteria</taxon>
        <taxon>Enterobacterales</taxon>
        <taxon>Enterobacteriaceae</taxon>
        <taxon>Escherichia</taxon>
    </lineage>
</organism>
<sequence>MNALKTTHDAKAPIVAFDMTPATLRELGLQESDVPEVHAVAQRIEVGSPQTVAEFGRDVAEHTSRYADSLLDQVRNSDLDEAGEKLTQVVAKARSLNVGPLSDNRSRLPLIGPLIDRFRVRSTGFMARFDTTREQIEHLVSEVQTTQQGIAQRNASLDEMFAAVREEHRLLGVHIAAGKVRLAELREQAEGLRGNVGNDPGRVQELADLDAMVANLDKRIGDLIALQHSAMQSLPTIRMIQANNQMLVDKFHTIREITVPAWKRQFMLALSLNEQKNAVELATAIDDTTNDLMKRNAALLHRTSVETAKENQRLVIDVDTLKQVQTTLIKTVEDVIRIQQEGVQKRKDAEKQIAAMRGDLQAKLTRQPVRELAQQESV</sequence>
<feature type="chain" id="PRO_0000172799" description="Protein KlaB">
    <location>
        <begin position="1"/>
        <end position="378"/>
    </location>
</feature>
<evidence type="ECO:0000305" key="1"/>
<geneLocation type="plasmid">
    <name>IncP-alpha RK2</name>
</geneLocation>
<gene>
    <name type="primary">klaB</name>
    <name type="synonym">telA</name>
</gene>
<proteinExistence type="inferred from homology"/>
<accession>Q52328</accession>
<accession>Q52326</accession>
<reference key="1">
    <citation type="journal article" date="1991" name="J. Bacteriol.">
        <title>Structural, molecular, and genetic analysis of the kilA operon of broad-host-range plasmid RK2.</title>
        <authorList>
            <person name="Goncharoff P."/>
            <person name="Saadi S."/>
            <person name="Chang C.H."/>
            <person name="Saltman L.H."/>
            <person name="Figurski D.H."/>
        </authorList>
    </citation>
    <scope>NUCLEOTIDE SEQUENCE [GENOMIC DNA]</scope>
</reference>
<reference key="2">
    <citation type="journal article" date="1991" name="J. Bacteriol.">
        <title>Transcriptional analysis, translational analysis, and sequence of the kilA-tellurite resistance region of plasmid RK2Ter.</title>
        <authorList>
            <person name="Walter E.G."/>
            <person name="Thomas C.M."/>
            <person name="Ibbotson J.P."/>
            <person name="Taylor D.E."/>
        </authorList>
    </citation>
    <scope>NUCLEOTIDE SEQUENCE [GENOMIC DNA]</scope>
</reference>